<name>ANFB_SHEEP</name>
<reference key="1">
    <citation type="journal article" date="1999" name="Domest. Anim. Endocrinol.">
        <title>The characterization of ovine genes for atrial, brain, and C-type natriuretic peptides.</title>
        <authorList>
            <person name="Aitken G.D."/>
            <person name="Raizis A.M."/>
            <person name="Yandle T.G."/>
            <person name="George P.M."/>
            <person name="Espiner E.A."/>
            <person name="Cameron V.A."/>
        </authorList>
    </citation>
    <scope>NUCLEOTIDE SEQUENCE [GENOMIC DNA]</scope>
</reference>
<protein>
    <recommendedName>
        <fullName>Natriuretic peptides B</fullName>
    </recommendedName>
    <alternativeName>
        <fullName evidence="3">Brain natriuretic factor prohormone</fullName>
        <shortName evidence="4">preproBNP</shortName>
        <shortName evidence="3">proBNP</shortName>
    </alternativeName>
    <alternativeName>
        <fullName evidence="1">Gamma-brain natriuretic peptide</fullName>
    </alternativeName>
    <alternativeName>
        <fullName evidence="2">Iso-ANP</fullName>
    </alternativeName>
    <component>
        <recommendedName>
            <fullName evidence="6">Brain natriuretic peptide 29</fullName>
            <shortName evidence="6">BNP-29</shortName>
        </recommendedName>
    </component>
    <component>
        <recommendedName>
            <fullName evidence="1">Brain natriuretic peptide 26</fullName>
            <shortName evidence="1">BNP-26</shortName>
        </recommendedName>
    </component>
</protein>
<keyword id="KW-1015">Disulfide bond</keyword>
<keyword id="KW-0372">Hormone</keyword>
<keyword id="KW-1185">Reference proteome</keyword>
<keyword id="KW-0964">Secreted</keyword>
<keyword id="KW-0732">Signal</keyword>
<keyword id="KW-0838">Vasoactive</keyword>
<evidence type="ECO:0000250" key="1">
    <source>
        <dbReference type="UniProtKB" id="P07634"/>
    </source>
</evidence>
<evidence type="ECO:0000250" key="2">
    <source>
        <dbReference type="UniProtKB" id="P13205"/>
    </source>
</evidence>
<evidence type="ECO:0000250" key="3">
    <source>
        <dbReference type="UniProtKB" id="P16860"/>
    </source>
</evidence>
<evidence type="ECO:0000250" key="4">
    <source>
        <dbReference type="UniProtKB" id="P40753"/>
    </source>
</evidence>
<evidence type="ECO:0000255" key="5"/>
<evidence type="ECO:0000303" key="6">
    <source>
    </source>
</evidence>
<evidence type="ECO:0000305" key="7"/>
<feature type="signal peptide" evidence="5">
    <location>
        <begin position="1"/>
        <end position="26"/>
    </location>
</feature>
<feature type="chain" id="PRO_0000001540" description="Natriuretic peptides B">
    <location>
        <begin position="27"/>
        <end position="129"/>
    </location>
</feature>
<feature type="peptide" id="PRO_0000001541" description="Brain natriuretic peptide 29" evidence="6">
    <location>
        <begin position="101"/>
        <end position="129"/>
    </location>
</feature>
<feature type="peptide" id="PRO_0000001542" description="Brain natriuretic peptide 26" evidence="1">
    <location>
        <begin position="104"/>
        <end position="129"/>
    </location>
</feature>
<feature type="site" description="Cleavage; by FAP" evidence="3">
    <location>
        <begin position="99"/>
        <end position="100"/>
    </location>
</feature>
<feature type="site" description="Cleavage; by CORIN" evidence="3">
    <location>
        <begin position="100"/>
        <end position="101"/>
    </location>
</feature>
<feature type="disulfide bond" evidence="3">
    <location>
        <begin position="107"/>
        <end position="123"/>
    </location>
</feature>
<comment type="function">
    <text evidence="3 4">Cardiac hormone that plays a key role in mediating cardio-renal homeostasis (By similarity). May also function as a paracrine antifibrotic factor in the heart (By similarity). Acts by specifically binding and stimulating NPR1 to produce cGMP, which in turn activates effector proteins that drive various biological responses. Involved in regulating the extracellular fluid volume and maintaining the fluid-electrolyte balance through natriuresis, diuresis, vasorelaxation, and inhibition of renin and aldosterone secretion. Binds the clearance receptor NPR3 (By similarity).</text>
</comment>
<comment type="subcellular location">
    <subcellularLocation>
        <location evidence="3">Secreted</location>
    </subcellularLocation>
    <text evidence="3">Detected in blood.</text>
</comment>
<comment type="PTM">
    <text evidence="3">The precursor molecule is proteolytically cleaved, possibly by FURIN or CORIN, to produce the active peptide (By similarity). May undergo further proteolytic cleavage by various proteases such as DPP4, MME and possibly FAP, to give rise to a variety of shorter peptides (By similarity). May be cleaved at Pro-99 by the prolyl endopeptidase FAP (seprase) activity (in vitro) (By similarity). May be degraded by IDE (By similarity). During IDE degradation, the resulting products initially increase the activation of NPR1 and can also stimulate NPR2 to produce cGMP before the fragments are completely degraded and inactivated by IDE (in vitro) (By similarity).</text>
</comment>
<comment type="similarity">
    <text evidence="7">Belongs to the natriuretic peptide family.</text>
</comment>
<gene>
    <name type="primary">NPPB</name>
</gene>
<sequence length="129" mass="14118">MDPQKALSRTLLLLLFLHLSLLGCRSHPLGGPGSASELPGLQELLDRLRDRVSELQAEQLRVEPLQQGQGLEETWDSPAAAPAGFLGPHHSLLQALRGPKMMRDSGCFGRRLDRIGSLSGLGCNVLRRY</sequence>
<proteinExistence type="inferred from homology"/>
<accession>O46541</accession>
<dbReference type="EMBL" id="AF037466">
    <property type="protein sequence ID" value="AAB92565.1"/>
    <property type="molecule type" value="Genomic_DNA"/>
</dbReference>
<dbReference type="RefSeq" id="NP_001153498.1">
    <property type="nucleotide sequence ID" value="NM_001160026.1"/>
</dbReference>
<dbReference type="BMRB" id="O46541"/>
<dbReference type="STRING" id="9940.ENSOARP00000019544"/>
<dbReference type="PaxDb" id="9940-ENSOARP00000019544"/>
<dbReference type="GeneID" id="100294642"/>
<dbReference type="KEGG" id="oas:100294642"/>
<dbReference type="CTD" id="4879"/>
<dbReference type="OrthoDB" id="9892281at2759"/>
<dbReference type="Proteomes" id="UP000002356">
    <property type="component" value="Unplaced"/>
</dbReference>
<dbReference type="GO" id="GO:0005737">
    <property type="term" value="C:cytoplasm"/>
    <property type="evidence" value="ECO:0007669"/>
    <property type="project" value="TreeGrafter"/>
</dbReference>
<dbReference type="GO" id="GO:0005615">
    <property type="term" value="C:extracellular space"/>
    <property type="evidence" value="ECO:0007669"/>
    <property type="project" value="TreeGrafter"/>
</dbReference>
<dbReference type="GO" id="GO:0005179">
    <property type="term" value="F:hormone activity"/>
    <property type="evidence" value="ECO:0007669"/>
    <property type="project" value="UniProtKB-KW"/>
</dbReference>
<dbReference type="GO" id="GO:0051427">
    <property type="term" value="F:hormone receptor binding"/>
    <property type="evidence" value="ECO:0007669"/>
    <property type="project" value="TreeGrafter"/>
</dbReference>
<dbReference type="GO" id="GO:0097746">
    <property type="term" value="P:blood vessel diameter maintenance"/>
    <property type="evidence" value="ECO:0007669"/>
    <property type="project" value="UniProtKB-KW"/>
</dbReference>
<dbReference type="GO" id="GO:0006182">
    <property type="term" value="P:cGMP biosynthetic process"/>
    <property type="evidence" value="ECO:0000250"/>
    <property type="project" value="UniProtKB"/>
</dbReference>
<dbReference type="GO" id="GO:0019934">
    <property type="term" value="P:cGMP-mediated signaling"/>
    <property type="evidence" value="ECO:0007669"/>
    <property type="project" value="TreeGrafter"/>
</dbReference>
<dbReference type="GO" id="GO:0003085">
    <property type="term" value="P:negative regulation of systemic arterial blood pressure"/>
    <property type="evidence" value="ECO:0007669"/>
    <property type="project" value="TreeGrafter"/>
</dbReference>
<dbReference type="GO" id="GO:0007218">
    <property type="term" value="P:neuropeptide signaling pathway"/>
    <property type="evidence" value="ECO:0007669"/>
    <property type="project" value="TreeGrafter"/>
</dbReference>
<dbReference type="GO" id="GO:0007168">
    <property type="term" value="P:receptor guanylyl cyclase signaling pathway"/>
    <property type="evidence" value="ECO:0000250"/>
    <property type="project" value="UniProtKB"/>
</dbReference>
<dbReference type="InterPro" id="IPR000663">
    <property type="entry name" value="Natr_peptide"/>
</dbReference>
<dbReference type="InterPro" id="IPR030480">
    <property type="entry name" value="Natr_peptide_CS"/>
</dbReference>
<dbReference type="InterPro" id="IPR050787">
    <property type="entry name" value="Natriuretic_peptide"/>
</dbReference>
<dbReference type="InterPro" id="IPR002408">
    <property type="entry name" value="Natriuretic_peptide_brain"/>
</dbReference>
<dbReference type="PANTHER" id="PTHR14066">
    <property type="entry name" value="ATRIAL NATRIURETIC FACTOR PRECURSOR"/>
    <property type="match status" value="1"/>
</dbReference>
<dbReference type="PANTHER" id="PTHR14066:SF10">
    <property type="entry name" value="NATRIURETIC PEPTIDES B"/>
    <property type="match status" value="1"/>
</dbReference>
<dbReference type="Pfam" id="PF00212">
    <property type="entry name" value="ANP"/>
    <property type="match status" value="1"/>
</dbReference>
<dbReference type="PRINTS" id="PR00712">
    <property type="entry name" value="BNATPEPTIDE"/>
</dbReference>
<dbReference type="PRINTS" id="PR00710">
    <property type="entry name" value="NATPEPTIDES"/>
</dbReference>
<dbReference type="SMART" id="SM00183">
    <property type="entry name" value="NAT_PEP"/>
    <property type="match status" value="1"/>
</dbReference>
<dbReference type="PROSITE" id="PS00263">
    <property type="entry name" value="NATRIURETIC_PEPTIDE"/>
    <property type="match status" value="1"/>
</dbReference>
<organism>
    <name type="scientific">Ovis aries</name>
    <name type="common">Sheep</name>
    <dbReference type="NCBI Taxonomy" id="9940"/>
    <lineage>
        <taxon>Eukaryota</taxon>
        <taxon>Metazoa</taxon>
        <taxon>Chordata</taxon>
        <taxon>Craniata</taxon>
        <taxon>Vertebrata</taxon>
        <taxon>Euteleostomi</taxon>
        <taxon>Mammalia</taxon>
        <taxon>Eutheria</taxon>
        <taxon>Laurasiatheria</taxon>
        <taxon>Artiodactyla</taxon>
        <taxon>Ruminantia</taxon>
        <taxon>Pecora</taxon>
        <taxon>Bovidae</taxon>
        <taxon>Caprinae</taxon>
        <taxon>Ovis</taxon>
    </lineage>
</organism>